<dbReference type="EC" id="7.1.1.-" evidence="1"/>
<dbReference type="EMBL" id="CP001099">
    <property type="protein sequence ID" value="ACF11708.1"/>
    <property type="molecule type" value="Genomic_DNA"/>
</dbReference>
<dbReference type="RefSeq" id="WP_012502541.1">
    <property type="nucleotide sequence ID" value="NC_011027.1"/>
</dbReference>
<dbReference type="SMR" id="B3QP55"/>
<dbReference type="STRING" id="517417.Cpar_1305"/>
<dbReference type="KEGG" id="cpc:Cpar_1305"/>
<dbReference type="eggNOG" id="COG0649">
    <property type="taxonomic scope" value="Bacteria"/>
</dbReference>
<dbReference type="HOGENOM" id="CLU_015134_1_2_10"/>
<dbReference type="OrthoDB" id="9801496at2"/>
<dbReference type="Proteomes" id="UP000008811">
    <property type="component" value="Chromosome"/>
</dbReference>
<dbReference type="GO" id="GO:0005886">
    <property type="term" value="C:plasma membrane"/>
    <property type="evidence" value="ECO:0007669"/>
    <property type="project" value="UniProtKB-SubCell"/>
</dbReference>
<dbReference type="GO" id="GO:0051287">
    <property type="term" value="F:NAD binding"/>
    <property type="evidence" value="ECO:0007669"/>
    <property type="project" value="InterPro"/>
</dbReference>
<dbReference type="GO" id="GO:0050136">
    <property type="term" value="F:NADH:ubiquinone reductase (non-electrogenic) activity"/>
    <property type="evidence" value="ECO:0007669"/>
    <property type="project" value="UniProtKB-UniRule"/>
</dbReference>
<dbReference type="GO" id="GO:0048038">
    <property type="term" value="F:quinone binding"/>
    <property type="evidence" value="ECO:0007669"/>
    <property type="project" value="UniProtKB-KW"/>
</dbReference>
<dbReference type="Gene3D" id="1.10.645.10">
    <property type="entry name" value="Cytochrome-c3 Hydrogenase, chain B"/>
    <property type="match status" value="1"/>
</dbReference>
<dbReference type="HAMAP" id="MF_01358">
    <property type="entry name" value="NDH1_NuoD"/>
    <property type="match status" value="1"/>
</dbReference>
<dbReference type="InterPro" id="IPR001135">
    <property type="entry name" value="NADH_Q_OxRdtase_suD"/>
</dbReference>
<dbReference type="InterPro" id="IPR022885">
    <property type="entry name" value="NDH1_su_D/H"/>
</dbReference>
<dbReference type="InterPro" id="IPR029014">
    <property type="entry name" value="NiFe-Hase_large"/>
</dbReference>
<dbReference type="NCBIfam" id="NF004739">
    <property type="entry name" value="PRK06075.1"/>
    <property type="match status" value="1"/>
</dbReference>
<dbReference type="PANTHER" id="PTHR11993:SF10">
    <property type="entry name" value="NADH DEHYDROGENASE [UBIQUINONE] IRON-SULFUR PROTEIN 2, MITOCHONDRIAL"/>
    <property type="match status" value="1"/>
</dbReference>
<dbReference type="PANTHER" id="PTHR11993">
    <property type="entry name" value="NADH-UBIQUINONE OXIDOREDUCTASE 49 KDA SUBUNIT"/>
    <property type="match status" value="1"/>
</dbReference>
<dbReference type="Pfam" id="PF00346">
    <property type="entry name" value="Complex1_49kDa"/>
    <property type="match status" value="2"/>
</dbReference>
<dbReference type="SUPFAM" id="SSF56762">
    <property type="entry name" value="HydB/Nqo4-like"/>
    <property type="match status" value="1"/>
</dbReference>
<organism>
    <name type="scientific">Chlorobaculum parvum (strain DSM 263 / NCIMB 8327)</name>
    <name type="common">Chlorobium vibrioforme subsp. thiosulfatophilum</name>
    <dbReference type="NCBI Taxonomy" id="517417"/>
    <lineage>
        <taxon>Bacteria</taxon>
        <taxon>Pseudomonadati</taxon>
        <taxon>Chlorobiota</taxon>
        <taxon>Chlorobiia</taxon>
        <taxon>Chlorobiales</taxon>
        <taxon>Chlorobiaceae</taxon>
        <taxon>Chlorobaculum</taxon>
    </lineage>
</organism>
<proteinExistence type="inferred from homology"/>
<protein>
    <recommendedName>
        <fullName evidence="1">NADH-quinone oxidoreductase subunit D</fullName>
        <ecNumber evidence="1">7.1.1.-</ecNumber>
    </recommendedName>
    <alternativeName>
        <fullName evidence="1">NADH dehydrogenase I subunit D</fullName>
    </alternativeName>
    <alternativeName>
        <fullName evidence="1">NDH-1 subunit D</fullName>
    </alternativeName>
</protein>
<name>NUOD_CHLP8</name>
<feature type="chain" id="PRO_0000357793" description="NADH-quinone oxidoreductase subunit D">
    <location>
        <begin position="1"/>
        <end position="400"/>
    </location>
</feature>
<comment type="function">
    <text evidence="1">NDH-1 shuttles electrons from NADH, via FMN and iron-sulfur (Fe-S) centers, to quinones in the respiratory chain. The immediate electron acceptor for the enzyme in this species is believed to be a menaquinone. Couples the redox reaction to proton translocation (for every two electrons transferred, four hydrogen ions are translocated across the cytoplasmic membrane), and thus conserves the redox energy in a proton gradient.</text>
</comment>
<comment type="catalytic activity">
    <reaction evidence="1">
        <text>a quinone + NADH + 5 H(+)(in) = a quinol + NAD(+) + 4 H(+)(out)</text>
        <dbReference type="Rhea" id="RHEA:57888"/>
        <dbReference type="ChEBI" id="CHEBI:15378"/>
        <dbReference type="ChEBI" id="CHEBI:24646"/>
        <dbReference type="ChEBI" id="CHEBI:57540"/>
        <dbReference type="ChEBI" id="CHEBI:57945"/>
        <dbReference type="ChEBI" id="CHEBI:132124"/>
    </reaction>
</comment>
<comment type="subunit">
    <text evidence="1">NDH-1 is composed of 14 different subunits. Subunits NuoB, C, D, E, F, and G constitute the peripheral sector of the complex.</text>
</comment>
<comment type="subcellular location">
    <subcellularLocation>
        <location evidence="1">Cell inner membrane</location>
        <topology evidence="1">Peripheral membrane protein</topology>
        <orientation evidence="1">Cytoplasmic side</orientation>
    </subcellularLocation>
</comment>
<comment type="similarity">
    <text evidence="1">Belongs to the complex I 49 kDa subunit family.</text>
</comment>
<reference key="1">
    <citation type="submission" date="2008-06" db="EMBL/GenBank/DDBJ databases">
        <title>Complete sequence of Chlorobaculum parvum NCIB 8327.</title>
        <authorList>
            <consortium name="US DOE Joint Genome Institute"/>
            <person name="Lucas S."/>
            <person name="Copeland A."/>
            <person name="Lapidus A."/>
            <person name="Glavina del Rio T."/>
            <person name="Dalin E."/>
            <person name="Tice H."/>
            <person name="Bruce D."/>
            <person name="Goodwin L."/>
            <person name="Pitluck S."/>
            <person name="Schmutz J."/>
            <person name="Larimer F."/>
            <person name="Land M."/>
            <person name="Hauser L."/>
            <person name="Kyrpides N."/>
            <person name="Mikhailova N."/>
            <person name="Zhao F."/>
            <person name="Li T."/>
            <person name="Liu Z."/>
            <person name="Overmann J."/>
            <person name="Bryant D.A."/>
            <person name="Richardson P."/>
        </authorList>
    </citation>
    <scope>NUCLEOTIDE SEQUENCE [LARGE SCALE GENOMIC DNA]</scope>
    <source>
        <strain>DSM 263 / NCIMB 8327</strain>
    </source>
</reference>
<sequence length="400" mass="45465">MQELGKVESNSIRVTRQDDKRITIEKDLDTEHMVLSMGPQHPSTHGVLRLECITDGEVIVEAEPYLGYLHRCFEKHCENVDYPGIVPYTDRMDYLAGMNSELAYCLTVEKLLDIEIPRRVEFIRVITSELNRIASHLVAIGTYAIDLGAFTPFLFCFRDREHIMNLLEWISGARMLYNYIWIGGLAYDVPADFKKRVAEFVTYFRPKAVELYKLLTENEIFVKRTKGIGIMPADVAINFAWSGPMLRGSGVKWDLRRNDPYSVYPELDFEVPVPDGKFSDVGDCLSRHLVRALEMEESLKIIEQCLDKMPEEQGFDPRALIPKKIRPKAGEVYGRAENPRGELGYYIVSDGKSTKPVRCKARSSCFVNLAAMKDLSKGQLLPDLVAIIGSIDIVLGEVDR</sequence>
<accession>B3QP55</accession>
<gene>
    <name evidence="1" type="primary">nuoD</name>
    <name type="ordered locus">Cpar_1305</name>
</gene>
<evidence type="ECO:0000255" key="1">
    <source>
        <dbReference type="HAMAP-Rule" id="MF_01358"/>
    </source>
</evidence>
<keyword id="KW-0997">Cell inner membrane</keyword>
<keyword id="KW-1003">Cell membrane</keyword>
<keyword id="KW-0472">Membrane</keyword>
<keyword id="KW-0520">NAD</keyword>
<keyword id="KW-0874">Quinone</keyword>
<keyword id="KW-1278">Translocase</keyword>
<keyword id="KW-0813">Transport</keyword>